<name>MSCL_ACIET</name>
<feature type="chain" id="PRO_1000191363" description="Large-conductance mechanosensitive channel">
    <location>
        <begin position="1"/>
        <end position="142"/>
    </location>
</feature>
<feature type="transmembrane region" description="Helical" evidence="1">
    <location>
        <begin position="10"/>
        <end position="30"/>
    </location>
</feature>
<feature type="transmembrane region" description="Helical" evidence="1">
    <location>
        <begin position="40"/>
        <end position="60"/>
    </location>
</feature>
<feature type="transmembrane region" description="Helical" evidence="1">
    <location>
        <begin position="86"/>
        <end position="106"/>
    </location>
</feature>
<dbReference type="EMBL" id="CP001392">
    <property type="protein sequence ID" value="ACM32230.1"/>
    <property type="molecule type" value="Genomic_DNA"/>
</dbReference>
<dbReference type="RefSeq" id="WP_011804237.1">
    <property type="nucleotide sequence ID" value="NC_011992.1"/>
</dbReference>
<dbReference type="SMR" id="B9MDX6"/>
<dbReference type="GeneID" id="84682690"/>
<dbReference type="KEGG" id="dia:Dtpsy_0751"/>
<dbReference type="eggNOG" id="COG1970">
    <property type="taxonomic scope" value="Bacteria"/>
</dbReference>
<dbReference type="HOGENOM" id="CLU_095787_0_1_4"/>
<dbReference type="Proteomes" id="UP000000450">
    <property type="component" value="Chromosome"/>
</dbReference>
<dbReference type="GO" id="GO:0005886">
    <property type="term" value="C:plasma membrane"/>
    <property type="evidence" value="ECO:0007669"/>
    <property type="project" value="UniProtKB-SubCell"/>
</dbReference>
<dbReference type="GO" id="GO:0008381">
    <property type="term" value="F:mechanosensitive monoatomic ion channel activity"/>
    <property type="evidence" value="ECO:0007669"/>
    <property type="project" value="UniProtKB-UniRule"/>
</dbReference>
<dbReference type="Gene3D" id="1.10.1200.120">
    <property type="entry name" value="Large-conductance mechanosensitive channel, MscL, domain 1"/>
    <property type="match status" value="1"/>
</dbReference>
<dbReference type="HAMAP" id="MF_00115">
    <property type="entry name" value="MscL"/>
    <property type="match status" value="1"/>
</dbReference>
<dbReference type="InterPro" id="IPR019823">
    <property type="entry name" value="Mechanosensitive_channel_CS"/>
</dbReference>
<dbReference type="InterPro" id="IPR001185">
    <property type="entry name" value="MS_channel"/>
</dbReference>
<dbReference type="InterPro" id="IPR037673">
    <property type="entry name" value="MSC/AndL"/>
</dbReference>
<dbReference type="InterPro" id="IPR036019">
    <property type="entry name" value="MscL_channel"/>
</dbReference>
<dbReference type="NCBIfam" id="TIGR00220">
    <property type="entry name" value="mscL"/>
    <property type="match status" value="1"/>
</dbReference>
<dbReference type="NCBIfam" id="NF001843">
    <property type="entry name" value="PRK00567.1-4"/>
    <property type="match status" value="1"/>
</dbReference>
<dbReference type="NCBIfam" id="NF010557">
    <property type="entry name" value="PRK13952.1"/>
    <property type="match status" value="1"/>
</dbReference>
<dbReference type="PANTHER" id="PTHR30266:SF2">
    <property type="entry name" value="LARGE-CONDUCTANCE MECHANOSENSITIVE CHANNEL"/>
    <property type="match status" value="1"/>
</dbReference>
<dbReference type="PANTHER" id="PTHR30266">
    <property type="entry name" value="MECHANOSENSITIVE CHANNEL MSCL"/>
    <property type="match status" value="1"/>
</dbReference>
<dbReference type="Pfam" id="PF01741">
    <property type="entry name" value="MscL"/>
    <property type="match status" value="1"/>
</dbReference>
<dbReference type="PRINTS" id="PR01264">
    <property type="entry name" value="MECHCHANNEL"/>
</dbReference>
<dbReference type="SUPFAM" id="SSF81330">
    <property type="entry name" value="Gated mechanosensitive channel"/>
    <property type="match status" value="1"/>
</dbReference>
<dbReference type="PROSITE" id="PS01327">
    <property type="entry name" value="MSCL"/>
    <property type="match status" value="1"/>
</dbReference>
<protein>
    <recommendedName>
        <fullName evidence="1">Large-conductance mechanosensitive channel</fullName>
    </recommendedName>
</protein>
<proteinExistence type="inferred from homology"/>
<evidence type="ECO:0000255" key="1">
    <source>
        <dbReference type="HAMAP-Rule" id="MF_00115"/>
    </source>
</evidence>
<reference key="1">
    <citation type="submission" date="2009-01" db="EMBL/GenBank/DDBJ databases">
        <title>Complete sequence of Diaphorobacter sp. TPSY.</title>
        <authorList>
            <consortium name="US DOE Joint Genome Institute"/>
            <person name="Lucas S."/>
            <person name="Copeland A."/>
            <person name="Lapidus A."/>
            <person name="Glavina del Rio T."/>
            <person name="Tice H."/>
            <person name="Bruce D."/>
            <person name="Goodwin L."/>
            <person name="Pitluck S."/>
            <person name="Chertkov O."/>
            <person name="Brettin T."/>
            <person name="Detter J.C."/>
            <person name="Han C."/>
            <person name="Larimer F."/>
            <person name="Land M."/>
            <person name="Hauser L."/>
            <person name="Kyrpides N."/>
            <person name="Mikhailova N."/>
            <person name="Coates J.D."/>
        </authorList>
    </citation>
    <scope>NUCLEOTIDE SEQUENCE [LARGE SCALE GENOMIC DNA]</scope>
    <source>
        <strain>TPSY</strain>
    </source>
</reference>
<keyword id="KW-0997">Cell inner membrane</keyword>
<keyword id="KW-1003">Cell membrane</keyword>
<keyword id="KW-0407">Ion channel</keyword>
<keyword id="KW-0406">Ion transport</keyword>
<keyword id="KW-0472">Membrane</keyword>
<keyword id="KW-1185">Reference proteome</keyword>
<keyword id="KW-0812">Transmembrane</keyword>
<keyword id="KW-1133">Transmembrane helix</keyword>
<keyword id="KW-0813">Transport</keyword>
<accession>B9MDX6</accession>
<gene>
    <name evidence="1" type="primary">mscL</name>
    <name type="ordered locus">Dtpsy_0751</name>
</gene>
<organism>
    <name type="scientific">Acidovorax ebreus (strain TPSY)</name>
    <name type="common">Diaphorobacter sp. (strain TPSY)</name>
    <dbReference type="NCBI Taxonomy" id="535289"/>
    <lineage>
        <taxon>Bacteria</taxon>
        <taxon>Pseudomonadati</taxon>
        <taxon>Pseudomonadota</taxon>
        <taxon>Betaproteobacteria</taxon>
        <taxon>Burkholderiales</taxon>
        <taxon>Comamonadaceae</taxon>
        <taxon>Diaphorobacter</taxon>
    </lineage>
</organism>
<comment type="function">
    <text evidence="1">Channel that opens in response to stretch forces in the membrane lipid bilayer. May participate in the regulation of osmotic pressure changes within the cell.</text>
</comment>
<comment type="subunit">
    <text evidence="1">Homopentamer.</text>
</comment>
<comment type="subcellular location">
    <subcellularLocation>
        <location evidence="1">Cell inner membrane</location>
        <topology evidence="1">Multi-pass membrane protein</topology>
    </subcellularLocation>
</comment>
<comment type="similarity">
    <text evidence="1">Belongs to the MscL family.</text>
</comment>
<sequence length="142" mass="15408">MGIAKEFREFAVKGNVIDLAVGVIIGGAFGKIVDSVVSDLIMPVVGLVFGKLDFSNLFIVLGSVPEGTPYTLEAIRKAGVPVLAYGNFITVAVNFVILAFIIFVMVKQINRLKRETPVEPPAPPATPEDIQLLREIRDSLKR</sequence>